<comment type="interaction">
    <interactant intactId="EBI-21648956">
        <id>O60809</id>
    </interactant>
    <interactant intactId="EBI-704197">
        <id>O00170</id>
        <label>AIP</label>
    </interactant>
    <organismsDiffer>false</organismsDiffer>
    <experiments>2</experiments>
</comment>
<comment type="similarity">
    <text evidence="4">Belongs to the PRAME family.</text>
</comment>
<gene>
    <name evidence="5" type="primary">PRAMEF10</name>
</gene>
<feature type="chain" id="PRO_0000156984" description="PRAME family member 10">
    <location>
        <begin position="1"/>
        <end position="474"/>
    </location>
</feature>
<feature type="repeat" description="LRR 1; degenerate" evidence="1">
    <location>
        <begin position="97"/>
        <end position="124"/>
    </location>
</feature>
<feature type="repeat" description="LRR 2; degenerate" evidence="1">
    <location>
        <begin position="179"/>
        <end position="203"/>
    </location>
</feature>
<feature type="repeat" description="LRR 3; degenerate" evidence="1">
    <location>
        <begin position="204"/>
        <end position="230"/>
    </location>
</feature>
<feature type="repeat" description="LRR 4; degenerate" evidence="1">
    <location>
        <begin position="231"/>
        <end position="265"/>
    </location>
</feature>
<feature type="repeat" description="LRR 5" evidence="1">
    <location>
        <begin position="266"/>
        <end position="291"/>
    </location>
</feature>
<feature type="repeat" description="LRR 6" evidence="1">
    <location>
        <begin position="292"/>
        <end position="323"/>
    </location>
</feature>
<feature type="repeat" description="LRR 7" evidence="1">
    <location>
        <begin position="324"/>
        <end position="342"/>
    </location>
</feature>
<feature type="repeat" description="LRR 8" evidence="1">
    <location>
        <begin position="348"/>
        <end position="375"/>
    </location>
</feature>
<feature type="repeat" description="LRR 9" evidence="1">
    <location>
        <begin position="376"/>
        <end position="400"/>
    </location>
</feature>
<feature type="sequence variant" id="VAR_029104" description="In dbSNP:rs3121398.">
    <original>K</original>
    <variation>I</variation>
    <location>
        <position position="99"/>
    </location>
</feature>
<feature type="sequence variant" id="VAR_029105" description="In dbSNP:rs2797709." evidence="2 3">
    <original>R</original>
    <variation>H</variation>
    <location>
        <position position="144"/>
    </location>
</feature>
<feature type="sequence variant" id="VAR_029106" description="In dbSNP:rs848424." evidence="2">
    <original>T</original>
    <variation>A</variation>
    <location>
        <position position="306"/>
    </location>
</feature>
<feature type="sequence variant" id="VAR_029107" description="In dbSNP:rs1736772." evidence="2">
    <original>R</original>
    <variation>G</variation>
    <location>
        <position position="402"/>
    </location>
</feature>
<feature type="sequence conflict" description="In Ref. 2; AAI12209/AAI12211 and 3; CAB41254." evidence="4" ref="2 3">
    <original>R</original>
    <variation>S</variation>
    <location>
        <position position="63"/>
    </location>
</feature>
<feature type="sequence conflict" description="In Ref. 2; AAI12209/AAI12211 and 3; CAB41254." evidence="4" ref="2 3">
    <original>P</original>
    <variation>L</variation>
    <location>
        <position position="73"/>
    </location>
</feature>
<feature type="sequence conflict" description="In Ref. 2; AAI12209/AAI12211 and 3; CAB41254." evidence="4" ref="2 3">
    <original>N</original>
    <variation>H</variation>
    <location>
        <position position="336"/>
    </location>
</feature>
<reference key="1">
    <citation type="journal article" date="2006" name="Nature">
        <title>The DNA sequence and biological annotation of human chromosome 1.</title>
        <authorList>
            <person name="Gregory S.G."/>
            <person name="Barlow K.F."/>
            <person name="McLay K.E."/>
            <person name="Kaul R."/>
            <person name="Swarbreck D."/>
            <person name="Dunham A."/>
            <person name="Scott C.E."/>
            <person name="Howe K.L."/>
            <person name="Woodfine K."/>
            <person name="Spencer C.C.A."/>
            <person name="Jones M.C."/>
            <person name="Gillson C."/>
            <person name="Searle S."/>
            <person name="Zhou Y."/>
            <person name="Kokocinski F."/>
            <person name="McDonald L."/>
            <person name="Evans R."/>
            <person name="Phillips K."/>
            <person name="Atkinson A."/>
            <person name="Cooper R."/>
            <person name="Jones C."/>
            <person name="Hall R.E."/>
            <person name="Andrews T.D."/>
            <person name="Lloyd C."/>
            <person name="Ainscough R."/>
            <person name="Almeida J.P."/>
            <person name="Ambrose K.D."/>
            <person name="Anderson F."/>
            <person name="Andrew R.W."/>
            <person name="Ashwell R.I.S."/>
            <person name="Aubin K."/>
            <person name="Babbage A.K."/>
            <person name="Bagguley C.L."/>
            <person name="Bailey J."/>
            <person name="Beasley H."/>
            <person name="Bethel G."/>
            <person name="Bird C.P."/>
            <person name="Bray-Allen S."/>
            <person name="Brown J.Y."/>
            <person name="Brown A.J."/>
            <person name="Buckley D."/>
            <person name="Burton J."/>
            <person name="Bye J."/>
            <person name="Carder C."/>
            <person name="Chapman J.C."/>
            <person name="Clark S.Y."/>
            <person name="Clarke G."/>
            <person name="Clee C."/>
            <person name="Cobley V."/>
            <person name="Collier R.E."/>
            <person name="Corby N."/>
            <person name="Coville G.J."/>
            <person name="Davies J."/>
            <person name="Deadman R."/>
            <person name="Dunn M."/>
            <person name="Earthrowl M."/>
            <person name="Ellington A.G."/>
            <person name="Errington H."/>
            <person name="Frankish A."/>
            <person name="Frankland J."/>
            <person name="French L."/>
            <person name="Garner P."/>
            <person name="Garnett J."/>
            <person name="Gay L."/>
            <person name="Ghori M.R.J."/>
            <person name="Gibson R."/>
            <person name="Gilby L.M."/>
            <person name="Gillett W."/>
            <person name="Glithero R.J."/>
            <person name="Grafham D.V."/>
            <person name="Griffiths C."/>
            <person name="Griffiths-Jones S."/>
            <person name="Grocock R."/>
            <person name="Hammond S."/>
            <person name="Harrison E.S.I."/>
            <person name="Hart E."/>
            <person name="Haugen E."/>
            <person name="Heath P.D."/>
            <person name="Holmes S."/>
            <person name="Holt K."/>
            <person name="Howden P.J."/>
            <person name="Hunt A.R."/>
            <person name="Hunt S.E."/>
            <person name="Hunter G."/>
            <person name="Isherwood J."/>
            <person name="James R."/>
            <person name="Johnson C."/>
            <person name="Johnson D."/>
            <person name="Joy A."/>
            <person name="Kay M."/>
            <person name="Kershaw J.K."/>
            <person name="Kibukawa M."/>
            <person name="Kimberley A.M."/>
            <person name="King A."/>
            <person name="Knights A.J."/>
            <person name="Lad H."/>
            <person name="Laird G."/>
            <person name="Lawlor S."/>
            <person name="Leongamornlert D.A."/>
            <person name="Lloyd D.M."/>
            <person name="Loveland J."/>
            <person name="Lovell J."/>
            <person name="Lush M.J."/>
            <person name="Lyne R."/>
            <person name="Martin S."/>
            <person name="Mashreghi-Mohammadi M."/>
            <person name="Matthews L."/>
            <person name="Matthews N.S.W."/>
            <person name="McLaren S."/>
            <person name="Milne S."/>
            <person name="Mistry S."/>
            <person name="Moore M.J.F."/>
            <person name="Nickerson T."/>
            <person name="O'Dell C.N."/>
            <person name="Oliver K."/>
            <person name="Palmeiri A."/>
            <person name="Palmer S.A."/>
            <person name="Parker A."/>
            <person name="Patel D."/>
            <person name="Pearce A.V."/>
            <person name="Peck A.I."/>
            <person name="Pelan S."/>
            <person name="Phelps K."/>
            <person name="Phillimore B.J."/>
            <person name="Plumb R."/>
            <person name="Rajan J."/>
            <person name="Raymond C."/>
            <person name="Rouse G."/>
            <person name="Saenphimmachak C."/>
            <person name="Sehra H.K."/>
            <person name="Sheridan E."/>
            <person name="Shownkeen R."/>
            <person name="Sims S."/>
            <person name="Skuce C.D."/>
            <person name="Smith M."/>
            <person name="Steward C."/>
            <person name="Subramanian S."/>
            <person name="Sycamore N."/>
            <person name="Tracey A."/>
            <person name="Tromans A."/>
            <person name="Van Helmond Z."/>
            <person name="Wall M."/>
            <person name="Wallis J.M."/>
            <person name="White S."/>
            <person name="Whitehead S.L."/>
            <person name="Wilkinson J.E."/>
            <person name="Willey D.L."/>
            <person name="Williams H."/>
            <person name="Wilming L."/>
            <person name="Wray P.W."/>
            <person name="Wu Z."/>
            <person name="Coulson A."/>
            <person name="Vaudin M."/>
            <person name="Sulston J.E."/>
            <person name="Durbin R.M."/>
            <person name="Hubbard T."/>
            <person name="Wooster R."/>
            <person name="Dunham I."/>
            <person name="Carter N.P."/>
            <person name="McVean G."/>
            <person name="Ross M.T."/>
            <person name="Harrow J."/>
            <person name="Olson M.V."/>
            <person name="Beck S."/>
            <person name="Rogers J."/>
            <person name="Bentley D.R."/>
        </authorList>
    </citation>
    <scope>NUCLEOTIDE SEQUENCE [LARGE SCALE GENOMIC DNA]</scope>
</reference>
<reference key="2">
    <citation type="journal article" date="2004" name="Genome Res.">
        <title>The status, quality, and expansion of the NIH full-length cDNA project: the Mammalian Gene Collection (MGC).</title>
        <authorList>
            <consortium name="The MGC Project Team"/>
        </authorList>
    </citation>
    <scope>NUCLEOTIDE SEQUENCE [LARGE SCALE MRNA]</scope>
    <scope>VARIANTS HIS-144 AND ALA-306</scope>
</reference>
<reference key="3">
    <citation type="submission" date="1999-04" db="EMBL/GenBank/DDBJ databases">
        <authorList>
            <person name="Rhodes S."/>
        </authorList>
    </citation>
    <scope>NUCLEOTIDE SEQUENCE [LARGE SCALE MRNA] OF 1-459</scope>
    <scope>VARIANTS HIS-144 AND GLY-402</scope>
</reference>
<organism>
    <name type="scientific">Homo sapiens</name>
    <name type="common">Human</name>
    <dbReference type="NCBI Taxonomy" id="9606"/>
    <lineage>
        <taxon>Eukaryota</taxon>
        <taxon>Metazoa</taxon>
        <taxon>Chordata</taxon>
        <taxon>Craniata</taxon>
        <taxon>Vertebrata</taxon>
        <taxon>Euteleostomi</taxon>
        <taxon>Mammalia</taxon>
        <taxon>Eutheria</taxon>
        <taxon>Euarchontoglires</taxon>
        <taxon>Primates</taxon>
        <taxon>Haplorrhini</taxon>
        <taxon>Catarrhini</taxon>
        <taxon>Hominidae</taxon>
        <taxon>Homo</taxon>
    </lineage>
</organism>
<protein>
    <recommendedName>
        <fullName evidence="5">PRAME family member 10</fullName>
    </recommendedName>
</protein>
<accession>O60809</accession>
<accession>Q2M1V2</accession>
<dbReference type="EMBL" id="AC245034">
    <property type="status" value="NOT_ANNOTATED_CDS"/>
    <property type="molecule type" value="Genomic_DNA"/>
</dbReference>
<dbReference type="EMBL" id="AL022101">
    <property type="status" value="NOT_ANNOTATED_CDS"/>
    <property type="molecule type" value="Genomic_DNA"/>
</dbReference>
<dbReference type="EMBL" id="BC112208">
    <property type="protein sequence ID" value="AAI12209.1"/>
    <property type="molecule type" value="mRNA"/>
</dbReference>
<dbReference type="EMBL" id="BC112210">
    <property type="protein sequence ID" value="AAI12211.1"/>
    <property type="molecule type" value="mRNA"/>
</dbReference>
<dbReference type="EMBL" id="AL049682">
    <property type="protein sequence ID" value="CAB41254.1"/>
    <property type="molecule type" value="mRNA"/>
</dbReference>
<dbReference type="CCDS" id="CCDS41255.1"/>
<dbReference type="RefSeq" id="NP_001034450.3">
    <property type="nucleotide sequence ID" value="NM_001039361.4"/>
</dbReference>
<dbReference type="SMR" id="O60809"/>
<dbReference type="FunCoup" id="O60809">
    <property type="interactions" value="27"/>
</dbReference>
<dbReference type="IntAct" id="O60809">
    <property type="interactions" value="3"/>
</dbReference>
<dbReference type="STRING" id="9606.ENSP00000235347"/>
<dbReference type="iPTMnet" id="O60809"/>
<dbReference type="PhosphoSitePlus" id="O60809"/>
<dbReference type="BioMuta" id="PRAMEF10"/>
<dbReference type="MassIVE" id="O60809"/>
<dbReference type="PaxDb" id="9606-ENSP00000235347"/>
<dbReference type="PeptideAtlas" id="O60809"/>
<dbReference type="Pumba" id="O60809"/>
<dbReference type="Antibodypedia" id="28586">
    <property type="antibodies" value="77 antibodies from 16 providers"/>
</dbReference>
<dbReference type="DNASU" id="343071"/>
<dbReference type="Ensembl" id="ENST00000235347.4">
    <property type="protein sequence ID" value="ENSP00000235347.4"/>
    <property type="gene ID" value="ENSG00000187545.5"/>
</dbReference>
<dbReference type="Ensembl" id="ENST00000632873.1">
    <property type="protein sequence ID" value="ENSP00000488485.1"/>
    <property type="gene ID" value="ENSG00000282663.1"/>
</dbReference>
<dbReference type="GeneID" id="343071"/>
<dbReference type="KEGG" id="hsa:343071"/>
<dbReference type="MANE-Select" id="ENST00000235347.4">
    <property type="protein sequence ID" value="ENSP00000235347.4"/>
    <property type="RefSeq nucleotide sequence ID" value="NM_001039361.4"/>
    <property type="RefSeq protein sequence ID" value="NP_001034450.3"/>
</dbReference>
<dbReference type="UCSC" id="uc031tpi.2">
    <property type="organism name" value="human"/>
</dbReference>
<dbReference type="AGR" id="HGNC:27997"/>
<dbReference type="CTD" id="343071"/>
<dbReference type="DisGeNET" id="343071"/>
<dbReference type="GeneCards" id="PRAMEF10"/>
<dbReference type="HGNC" id="HGNC:27997">
    <property type="gene designation" value="PRAMEF10"/>
</dbReference>
<dbReference type="HPA" id="ENSG00000187545">
    <property type="expression patterns" value="Tissue enriched (liver)"/>
</dbReference>
<dbReference type="neXtProt" id="NX_O60809"/>
<dbReference type="OpenTargets" id="ENSG00000187545"/>
<dbReference type="PharmGKB" id="PA142671147"/>
<dbReference type="VEuPathDB" id="HostDB:ENSG00000187545"/>
<dbReference type="eggNOG" id="ENOG502QWSJ">
    <property type="taxonomic scope" value="Eukaryota"/>
</dbReference>
<dbReference type="GeneTree" id="ENSGT01030000234531"/>
<dbReference type="HOGENOM" id="CLU_039635_2_1_1"/>
<dbReference type="InParanoid" id="O60809"/>
<dbReference type="OMA" id="NRGHINW"/>
<dbReference type="OrthoDB" id="5482at9604"/>
<dbReference type="PAN-GO" id="O60809">
    <property type="GO annotations" value="1 GO annotation based on evolutionary models"/>
</dbReference>
<dbReference type="TreeFam" id="TF332708"/>
<dbReference type="PathwayCommons" id="O60809"/>
<dbReference type="SignaLink" id="O60809"/>
<dbReference type="BioGRID-ORCS" id="343071">
    <property type="hits" value="17 hits in 1052 CRISPR screens"/>
</dbReference>
<dbReference type="GenomeRNAi" id="343071"/>
<dbReference type="Pharos" id="O60809">
    <property type="development level" value="Tdark"/>
</dbReference>
<dbReference type="PRO" id="PR:O60809"/>
<dbReference type="Proteomes" id="UP000005640">
    <property type="component" value="Chromosome 1"/>
</dbReference>
<dbReference type="RNAct" id="O60809">
    <property type="molecule type" value="protein"/>
</dbReference>
<dbReference type="Bgee" id="ENSG00000187545">
    <property type="expression patterns" value="Expressed in liver and 1 other cell type or tissue"/>
</dbReference>
<dbReference type="GO" id="GO:0031462">
    <property type="term" value="C:Cul2-RING ubiquitin ligase complex"/>
    <property type="evidence" value="ECO:0000318"/>
    <property type="project" value="GO_Central"/>
</dbReference>
<dbReference type="GO" id="GO:0005737">
    <property type="term" value="C:cytoplasm"/>
    <property type="evidence" value="ECO:0000318"/>
    <property type="project" value="GO_Central"/>
</dbReference>
<dbReference type="GO" id="GO:1990756">
    <property type="term" value="F:ubiquitin-like ligase-substrate adaptor activity"/>
    <property type="evidence" value="ECO:0000318"/>
    <property type="project" value="GO_Central"/>
</dbReference>
<dbReference type="GO" id="GO:0043066">
    <property type="term" value="P:negative regulation of apoptotic process"/>
    <property type="evidence" value="ECO:0007669"/>
    <property type="project" value="InterPro"/>
</dbReference>
<dbReference type="GO" id="GO:0045596">
    <property type="term" value="P:negative regulation of cell differentiation"/>
    <property type="evidence" value="ECO:0007669"/>
    <property type="project" value="InterPro"/>
</dbReference>
<dbReference type="GO" id="GO:0045892">
    <property type="term" value="P:negative regulation of DNA-templated transcription"/>
    <property type="evidence" value="ECO:0007669"/>
    <property type="project" value="InterPro"/>
</dbReference>
<dbReference type="GO" id="GO:0008284">
    <property type="term" value="P:positive regulation of cell population proliferation"/>
    <property type="evidence" value="ECO:0007669"/>
    <property type="project" value="InterPro"/>
</dbReference>
<dbReference type="GO" id="GO:0043161">
    <property type="term" value="P:proteasome-mediated ubiquitin-dependent protein catabolic process"/>
    <property type="evidence" value="ECO:0000318"/>
    <property type="project" value="GO_Central"/>
</dbReference>
<dbReference type="FunFam" id="3.80.10.10:FF:000079">
    <property type="entry name" value="PRAME family member 18"/>
    <property type="match status" value="1"/>
</dbReference>
<dbReference type="Gene3D" id="3.80.10.10">
    <property type="entry name" value="Ribonuclease Inhibitor"/>
    <property type="match status" value="1"/>
</dbReference>
<dbReference type="InterPro" id="IPR032675">
    <property type="entry name" value="LRR_dom_sf"/>
</dbReference>
<dbReference type="InterPro" id="IPR026271">
    <property type="entry name" value="PRAME"/>
</dbReference>
<dbReference type="InterPro" id="IPR050694">
    <property type="entry name" value="PRAME_domain"/>
</dbReference>
<dbReference type="PANTHER" id="PTHR14224:SF28">
    <property type="entry name" value="PRAME FAMILY MEMBER 10-RELATED"/>
    <property type="match status" value="1"/>
</dbReference>
<dbReference type="PANTHER" id="PTHR14224">
    <property type="entry name" value="SIMILAR TO PREFERENTIALLY EXPRESSED ANTIGEN IN MELANOMA-LIKE 3"/>
    <property type="match status" value="1"/>
</dbReference>
<dbReference type="PIRSF" id="PIRSF038286">
    <property type="entry name" value="PRAME"/>
    <property type="match status" value="1"/>
</dbReference>
<dbReference type="SUPFAM" id="SSF52047">
    <property type="entry name" value="RNI-like"/>
    <property type="match status" value="1"/>
</dbReference>
<name>PRA10_HUMAN</name>
<sequence>MSLQAPSRLLELAGQSLLRNQFLTIFTLDELPREVFPLMFMEAFSMRRFEALKLMVQAWPFLRLPLGSLMKTPHLETLQAVLRGLDTLVAQKVRPRRWKLQVLDLRDVDENFWTIWSGARVLSCSPEAMSKRQTVEDCPRMGERQPLKVFIDLCLKESTLDECLSYLFGWIHYRRGLVHLCCSKVQNYSMPTSSFRNLLERIYPDSIQELEVWKKCSLNKTGKFAPYLSQMSNLRELFLAFGYERELYVSVQWPCIPDLDSPFLCLYYPQMLYIKKISNIKEHLEHLLRYLKNPLGAFIFSDAYLTDRDMECLSQYPSLSQLKELRLIHILMWTTNLEPLGVLLEKVAATLKTLVLKDCRIQDPQLRVLLPALSHCSQLTTFNFHGNETSMNALKDLLRHTRGLSKLGLELYPAPLESLDYKGHVNWEILTPIRAELMRTLREVRQPKRIFFGPVPCPNCGSWPSEKVDFHLCS</sequence>
<proteinExistence type="evidence at protein level"/>
<evidence type="ECO:0000250" key="1">
    <source>
        <dbReference type="UniProtKB" id="Q3UWY1"/>
    </source>
</evidence>
<evidence type="ECO:0000269" key="2">
    <source>
    </source>
</evidence>
<evidence type="ECO:0000269" key="3">
    <source ref="3"/>
</evidence>
<evidence type="ECO:0000305" key="4"/>
<evidence type="ECO:0000312" key="5">
    <source>
        <dbReference type="HGNC" id="HGNC:27997"/>
    </source>
</evidence>
<keyword id="KW-0433">Leucine-rich repeat</keyword>
<keyword id="KW-1185">Reference proteome</keyword>
<keyword id="KW-0677">Repeat</keyword>